<sequence>MRLNTLSPAAGSKHAPKRVGRGMGSGLGKTAGRGHKGQKSRSGGGVRPGFEGGQMPLKIRLPKFGFTSRRAMVTAEVRVLELAKVNGDVIDLNALKDANVITRNIQFAKIVLSGTIERPVTVKGLKVTKGARAAIEAAGGKIEE</sequence>
<dbReference type="EMBL" id="CP000563">
    <property type="protein sequence ID" value="ABN63616.1"/>
    <property type="molecule type" value="Genomic_DNA"/>
</dbReference>
<dbReference type="RefSeq" id="WP_006083581.1">
    <property type="nucleotide sequence ID" value="NC_009052.1"/>
</dbReference>
<dbReference type="SMR" id="A3DA53"/>
<dbReference type="STRING" id="325240.Sbal_4151"/>
<dbReference type="GeneID" id="67441779"/>
<dbReference type="KEGG" id="sbl:Sbal_4151"/>
<dbReference type="HOGENOM" id="CLU_055188_4_2_6"/>
<dbReference type="OrthoDB" id="9810293at2"/>
<dbReference type="Proteomes" id="UP000001557">
    <property type="component" value="Chromosome"/>
</dbReference>
<dbReference type="GO" id="GO:0022625">
    <property type="term" value="C:cytosolic large ribosomal subunit"/>
    <property type="evidence" value="ECO:0007669"/>
    <property type="project" value="TreeGrafter"/>
</dbReference>
<dbReference type="GO" id="GO:0019843">
    <property type="term" value="F:rRNA binding"/>
    <property type="evidence" value="ECO:0007669"/>
    <property type="project" value="UniProtKB-UniRule"/>
</dbReference>
<dbReference type="GO" id="GO:0003735">
    <property type="term" value="F:structural constituent of ribosome"/>
    <property type="evidence" value="ECO:0007669"/>
    <property type="project" value="InterPro"/>
</dbReference>
<dbReference type="GO" id="GO:0006412">
    <property type="term" value="P:translation"/>
    <property type="evidence" value="ECO:0007669"/>
    <property type="project" value="UniProtKB-UniRule"/>
</dbReference>
<dbReference type="FunFam" id="3.100.10.10:FF:000003">
    <property type="entry name" value="50S ribosomal protein L15"/>
    <property type="match status" value="1"/>
</dbReference>
<dbReference type="Gene3D" id="3.100.10.10">
    <property type="match status" value="1"/>
</dbReference>
<dbReference type="HAMAP" id="MF_01341">
    <property type="entry name" value="Ribosomal_uL15"/>
    <property type="match status" value="1"/>
</dbReference>
<dbReference type="InterPro" id="IPR030878">
    <property type="entry name" value="Ribosomal_uL15"/>
</dbReference>
<dbReference type="InterPro" id="IPR021131">
    <property type="entry name" value="Ribosomal_uL15/eL18"/>
</dbReference>
<dbReference type="InterPro" id="IPR036227">
    <property type="entry name" value="Ribosomal_uL15/eL18_sf"/>
</dbReference>
<dbReference type="InterPro" id="IPR005749">
    <property type="entry name" value="Ribosomal_uL15_bac-type"/>
</dbReference>
<dbReference type="InterPro" id="IPR001196">
    <property type="entry name" value="Ribosomal_uL15_CS"/>
</dbReference>
<dbReference type="NCBIfam" id="TIGR01071">
    <property type="entry name" value="rplO_bact"/>
    <property type="match status" value="1"/>
</dbReference>
<dbReference type="PANTHER" id="PTHR12934">
    <property type="entry name" value="50S RIBOSOMAL PROTEIN L15"/>
    <property type="match status" value="1"/>
</dbReference>
<dbReference type="PANTHER" id="PTHR12934:SF11">
    <property type="entry name" value="LARGE RIBOSOMAL SUBUNIT PROTEIN UL15M"/>
    <property type="match status" value="1"/>
</dbReference>
<dbReference type="Pfam" id="PF00828">
    <property type="entry name" value="Ribosomal_L27A"/>
    <property type="match status" value="1"/>
</dbReference>
<dbReference type="SUPFAM" id="SSF52080">
    <property type="entry name" value="Ribosomal proteins L15p and L18e"/>
    <property type="match status" value="1"/>
</dbReference>
<dbReference type="PROSITE" id="PS00475">
    <property type="entry name" value="RIBOSOMAL_L15"/>
    <property type="match status" value="1"/>
</dbReference>
<evidence type="ECO:0000255" key="1">
    <source>
        <dbReference type="HAMAP-Rule" id="MF_01341"/>
    </source>
</evidence>
<evidence type="ECO:0000256" key="2">
    <source>
        <dbReference type="SAM" id="MobiDB-lite"/>
    </source>
</evidence>
<evidence type="ECO:0000305" key="3"/>
<gene>
    <name evidence="1" type="primary">rplO</name>
    <name type="ordered locus">Sbal_4151</name>
</gene>
<keyword id="KW-1185">Reference proteome</keyword>
<keyword id="KW-0687">Ribonucleoprotein</keyword>
<keyword id="KW-0689">Ribosomal protein</keyword>
<keyword id="KW-0694">RNA-binding</keyword>
<keyword id="KW-0699">rRNA-binding</keyword>
<proteinExistence type="inferred from homology"/>
<accession>A3DA53</accession>
<name>RL15_SHEB5</name>
<reference key="1">
    <citation type="submission" date="2007-02" db="EMBL/GenBank/DDBJ databases">
        <title>Complete sequence of chromosome of Shewanella baltica OS155.</title>
        <authorList>
            <consortium name="US DOE Joint Genome Institute"/>
            <person name="Copeland A."/>
            <person name="Lucas S."/>
            <person name="Lapidus A."/>
            <person name="Barry K."/>
            <person name="Detter J.C."/>
            <person name="Glavina del Rio T."/>
            <person name="Hammon N."/>
            <person name="Israni S."/>
            <person name="Dalin E."/>
            <person name="Tice H."/>
            <person name="Pitluck S."/>
            <person name="Sims D.R."/>
            <person name="Brettin T."/>
            <person name="Bruce D."/>
            <person name="Han C."/>
            <person name="Tapia R."/>
            <person name="Brainard J."/>
            <person name="Schmutz J."/>
            <person name="Larimer F."/>
            <person name="Land M."/>
            <person name="Hauser L."/>
            <person name="Kyrpides N."/>
            <person name="Mikhailova N."/>
            <person name="Brettar I."/>
            <person name="Klappenbach J."/>
            <person name="Konstantinidis K."/>
            <person name="Rodrigues J."/>
            <person name="Tiedje J."/>
            <person name="Richardson P."/>
        </authorList>
    </citation>
    <scope>NUCLEOTIDE SEQUENCE [LARGE SCALE GENOMIC DNA]</scope>
    <source>
        <strain>OS155 / ATCC BAA-1091</strain>
    </source>
</reference>
<feature type="chain" id="PRO_1000054535" description="Large ribosomal subunit protein uL15">
    <location>
        <begin position="1"/>
        <end position="144"/>
    </location>
</feature>
<feature type="region of interest" description="Disordered" evidence="2">
    <location>
        <begin position="1"/>
        <end position="54"/>
    </location>
</feature>
<feature type="compositionally biased region" description="Gly residues" evidence="2">
    <location>
        <begin position="21"/>
        <end position="31"/>
    </location>
</feature>
<feature type="compositionally biased region" description="Gly residues" evidence="2">
    <location>
        <begin position="42"/>
        <end position="52"/>
    </location>
</feature>
<protein>
    <recommendedName>
        <fullName evidence="1">Large ribosomal subunit protein uL15</fullName>
    </recommendedName>
    <alternativeName>
        <fullName evidence="3">50S ribosomal protein L15</fullName>
    </alternativeName>
</protein>
<organism>
    <name type="scientific">Shewanella baltica (strain OS155 / ATCC BAA-1091)</name>
    <dbReference type="NCBI Taxonomy" id="325240"/>
    <lineage>
        <taxon>Bacteria</taxon>
        <taxon>Pseudomonadati</taxon>
        <taxon>Pseudomonadota</taxon>
        <taxon>Gammaproteobacteria</taxon>
        <taxon>Alteromonadales</taxon>
        <taxon>Shewanellaceae</taxon>
        <taxon>Shewanella</taxon>
    </lineage>
</organism>
<comment type="function">
    <text evidence="1">Binds to the 23S rRNA.</text>
</comment>
<comment type="subunit">
    <text evidence="1">Part of the 50S ribosomal subunit.</text>
</comment>
<comment type="similarity">
    <text evidence="1">Belongs to the universal ribosomal protein uL15 family.</text>
</comment>